<dbReference type="EMBL" id="CP000548">
    <property type="protein sequence ID" value="ABO05228.1"/>
    <property type="molecule type" value="Genomic_DNA"/>
</dbReference>
<dbReference type="RefSeq" id="WP_004199902.1">
    <property type="nucleotide sequence ID" value="NZ_CP007802.1"/>
</dbReference>
<dbReference type="SMR" id="A3MPT9"/>
<dbReference type="GeneID" id="93061745"/>
<dbReference type="KEGG" id="bmaz:BM44_578"/>
<dbReference type="KEGG" id="bmn:BMA10247_2754"/>
<dbReference type="PATRIC" id="fig|320389.8.peg.632"/>
<dbReference type="GO" id="GO:0033281">
    <property type="term" value="C:TAT protein transport complex"/>
    <property type="evidence" value="ECO:0007669"/>
    <property type="project" value="UniProtKB-UniRule"/>
</dbReference>
<dbReference type="GO" id="GO:0008320">
    <property type="term" value="F:protein transmembrane transporter activity"/>
    <property type="evidence" value="ECO:0007669"/>
    <property type="project" value="UniProtKB-UniRule"/>
</dbReference>
<dbReference type="GO" id="GO:0043953">
    <property type="term" value="P:protein transport by the Tat complex"/>
    <property type="evidence" value="ECO:0007669"/>
    <property type="project" value="UniProtKB-UniRule"/>
</dbReference>
<dbReference type="Gene3D" id="1.20.5.3310">
    <property type="match status" value="1"/>
</dbReference>
<dbReference type="HAMAP" id="MF_00236">
    <property type="entry name" value="TatA_E"/>
    <property type="match status" value="1"/>
</dbReference>
<dbReference type="InterPro" id="IPR003369">
    <property type="entry name" value="TatA/B/E"/>
</dbReference>
<dbReference type="InterPro" id="IPR006312">
    <property type="entry name" value="TatA/E"/>
</dbReference>
<dbReference type="NCBIfam" id="NF002813">
    <property type="entry name" value="PRK02958.1"/>
    <property type="match status" value="1"/>
</dbReference>
<dbReference type="NCBIfam" id="TIGR01411">
    <property type="entry name" value="tatAE"/>
    <property type="match status" value="1"/>
</dbReference>
<dbReference type="PANTHER" id="PTHR42982">
    <property type="entry name" value="SEC-INDEPENDENT PROTEIN TRANSLOCASE PROTEIN TATA"/>
    <property type="match status" value="1"/>
</dbReference>
<dbReference type="PANTHER" id="PTHR42982:SF1">
    <property type="entry name" value="SEC-INDEPENDENT PROTEIN TRANSLOCASE PROTEIN TATA"/>
    <property type="match status" value="1"/>
</dbReference>
<dbReference type="Pfam" id="PF02416">
    <property type="entry name" value="TatA_B_E"/>
    <property type="match status" value="1"/>
</dbReference>
<organism>
    <name type="scientific">Burkholderia mallei (strain NCTC 10247)</name>
    <dbReference type="NCBI Taxonomy" id="320389"/>
    <lineage>
        <taxon>Bacteria</taxon>
        <taxon>Pseudomonadati</taxon>
        <taxon>Pseudomonadota</taxon>
        <taxon>Betaproteobacteria</taxon>
        <taxon>Burkholderiales</taxon>
        <taxon>Burkholderiaceae</taxon>
        <taxon>Burkholderia</taxon>
        <taxon>pseudomallei group</taxon>
    </lineage>
</organism>
<reference key="1">
    <citation type="journal article" date="2010" name="Genome Biol. Evol.">
        <title>Continuing evolution of Burkholderia mallei through genome reduction and large-scale rearrangements.</title>
        <authorList>
            <person name="Losada L."/>
            <person name="Ronning C.M."/>
            <person name="DeShazer D."/>
            <person name="Woods D."/>
            <person name="Fedorova N."/>
            <person name="Kim H.S."/>
            <person name="Shabalina S.A."/>
            <person name="Pearson T.R."/>
            <person name="Brinkac L."/>
            <person name="Tan P."/>
            <person name="Nandi T."/>
            <person name="Crabtree J."/>
            <person name="Badger J."/>
            <person name="Beckstrom-Sternberg S."/>
            <person name="Saqib M."/>
            <person name="Schutzer S.E."/>
            <person name="Keim P."/>
            <person name="Nierman W.C."/>
        </authorList>
    </citation>
    <scope>NUCLEOTIDE SEQUENCE [LARGE SCALE GENOMIC DNA]</scope>
    <source>
        <strain>NCTC 10247</strain>
    </source>
</reference>
<gene>
    <name evidence="1" type="primary">tatA</name>
    <name type="ordered locus">BMA10247_2754</name>
</gene>
<feature type="chain" id="PRO_1000044364" description="Sec-independent protein translocase protein TatA">
    <location>
        <begin position="1"/>
        <end position="77"/>
    </location>
</feature>
<feature type="transmembrane region" description="Helical" evidence="1">
    <location>
        <begin position="1"/>
        <end position="21"/>
    </location>
</feature>
<feature type="region of interest" description="Disordered" evidence="2">
    <location>
        <begin position="43"/>
        <end position="77"/>
    </location>
</feature>
<feature type="compositionally biased region" description="Basic and acidic residues" evidence="2">
    <location>
        <begin position="64"/>
        <end position="77"/>
    </location>
</feature>
<comment type="function">
    <text evidence="1">Part of the twin-arginine translocation (Tat) system that transports large folded proteins containing a characteristic twin-arginine motif in their signal peptide across membranes. TatA could form the protein-conducting channel of the Tat system.</text>
</comment>
<comment type="subunit">
    <text evidence="1">The Tat system comprises two distinct complexes: a TatABC complex, containing multiple copies of TatA, TatB and TatC subunits, and a separate TatA complex, containing only TatA subunits. Substrates initially bind to the TatABC complex, which probably triggers association of the separate TatA complex to form the active translocon.</text>
</comment>
<comment type="subcellular location">
    <subcellularLocation>
        <location evidence="1">Cell inner membrane</location>
        <topology evidence="1">Single-pass membrane protein</topology>
    </subcellularLocation>
</comment>
<comment type="similarity">
    <text evidence="1">Belongs to the TatA/E family.</text>
</comment>
<sequence length="77" mass="8152">MGGLSIWHWLIVLLIVALVFGTKKLRNIGNDLGSAVKGFKDGMKESEAPADAQQLPRSGSVNVDAKDAARSSDSNKA</sequence>
<keyword id="KW-0997">Cell inner membrane</keyword>
<keyword id="KW-1003">Cell membrane</keyword>
<keyword id="KW-0472">Membrane</keyword>
<keyword id="KW-0653">Protein transport</keyword>
<keyword id="KW-0811">Translocation</keyword>
<keyword id="KW-0812">Transmembrane</keyword>
<keyword id="KW-1133">Transmembrane helix</keyword>
<keyword id="KW-0813">Transport</keyword>
<name>TATA_BURM7</name>
<accession>A3MPT9</accession>
<proteinExistence type="inferred from homology"/>
<evidence type="ECO:0000255" key="1">
    <source>
        <dbReference type="HAMAP-Rule" id="MF_00236"/>
    </source>
</evidence>
<evidence type="ECO:0000256" key="2">
    <source>
        <dbReference type="SAM" id="MobiDB-lite"/>
    </source>
</evidence>
<protein>
    <recommendedName>
        <fullName evidence="1">Sec-independent protein translocase protein TatA</fullName>
    </recommendedName>
</protein>